<feature type="chain" id="PRO_0000383643" description="Uncharacterized HTH-type transcriptional regulator YuzN">
    <location>
        <begin position="1"/>
        <end position="92"/>
    </location>
</feature>
<feature type="domain" description="HTH arsR-type" evidence="1">
    <location>
        <begin position="1"/>
        <end position="92"/>
    </location>
</feature>
<feature type="DNA-binding region" description="H-T-H motif" evidence="1">
    <location>
        <begin position="37"/>
        <end position="61"/>
    </location>
</feature>
<proteinExistence type="predicted"/>
<protein>
    <recommendedName>
        <fullName>Uncharacterized HTH-type transcriptional regulator YuzN</fullName>
    </recommendedName>
</protein>
<reference key="1">
    <citation type="journal article" date="1997" name="Nature">
        <title>The complete genome sequence of the Gram-positive bacterium Bacillus subtilis.</title>
        <authorList>
            <person name="Kunst F."/>
            <person name="Ogasawara N."/>
            <person name="Moszer I."/>
            <person name="Albertini A.M."/>
            <person name="Alloni G."/>
            <person name="Azevedo V."/>
            <person name="Bertero M.G."/>
            <person name="Bessieres P."/>
            <person name="Bolotin A."/>
            <person name="Borchert S."/>
            <person name="Borriss R."/>
            <person name="Boursier L."/>
            <person name="Brans A."/>
            <person name="Braun M."/>
            <person name="Brignell S.C."/>
            <person name="Bron S."/>
            <person name="Brouillet S."/>
            <person name="Bruschi C.V."/>
            <person name="Caldwell B."/>
            <person name="Capuano V."/>
            <person name="Carter N.M."/>
            <person name="Choi S.-K."/>
            <person name="Codani J.-J."/>
            <person name="Connerton I.F."/>
            <person name="Cummings N.J."/>
            <person name="Daniel R.A."/>
            <person name="Denizot F."/>
            <person name="Devine K.M."/>
            <person name="Duesterhoeft A."/>
            <person name="Ehrlich S.D."/>
            <person name="Emmerson P.T."/>
            <person name="Entian K.-D."/>
            <person name="Errington J."/>
            <person name="Fabret C."/>
            <person name="Ferrari E."/>
            <person name="Foulger D."/>
            <person name="Fritz C."/>
            <person name="Fujita M."/>
            <person name="Fujita Y."/>
            <person name="Fuma S."/>
            <person name="Galizzi A."/>
            <person name="Galleron N."/>
            <person name="Ghim S.-Y."/>
            <person name="Glaser P."/>
            <person name="Goffeau A."/>
            <person name="Golightly E.J."/>
            <person name="Grandi G."/>
            <person name="Guiseppi G."/>
            <person name="Guy B.J."/>
            <person name="Haga K."/>
            <person name="Haiech J."/>
            <person name="Harwood C.R."/>
            <person name="Henaut A."/>
            <person name="Hilbert H."/>
            <person name="Holsappel S."/>
            <person name="Hosono S."/>
            <person name="Hullo M.-F."/>
            <person name="Itaya M."/>
            <person name="Jones L.-M."/>
            <person name="Joris B."/>
            <person name="Karamata D."/>
            <person name="Kasahara Y."/>
            <person name="Klaerr-Blanchard M."/>
            <person name="Klein C."/>
            <person name="Kobayashi Y."/>
            <person name="Koetter P."/>
            <person name="Koningstein G."/>
            <person name="Krogh S."/>
            <person name="Kumano M."/>
            <person name="Kurita K."/>
            <person name="Lapidus A."/>
            <person name="Lardinois S."/>
            <person name="Lauber J."/>
            <person name="Lazarevic V."/>
            <person name="Lee S.-M."/>
            <person name="Levine A."/>
            <person name="Liu H."/>
            <person name="Masuda S."/>
            <person name="Mauel C."/>
            <person name="Medigue C."/>
            <person name="Medina N."/>
            <person name="Mellado R.P."/>
            <person name="Mizuno M."/>
            <person name="Moestl D."/>
            <person name="Nakai S."/>
            <person name="Noback M."/>
            <person name="Noone D."/>
            <person name="O'Reilly M."/>
            <person name="Ogawa K."/>
            <person name="Ogiwara A."/>
            <person name="Oudega B."/>
            <person name="Park S.-H."/>
            <person name="Parro V."/>
            <person name="Pohl T.M."/>
            <person name="Portetelle D."/>
            <person name="Porwollik S."/>
            <person name="Prescott A.M."/>
            <person name="Presecan E."/>
            <person name="Pujic P."/>
            <person name="Purnelle B."/>
            <person name="Rapoport G."/>
            <person name="Rey M."/>
            <person name="Reynolds S."/>
            <person name="Rieger M."/>
            <person name="Rivolta C."/>
            <person name="Rocha E."/>
            <person name="Roche B."/>
            <person name="Rose M."/>
            <person name="Sadaie Y."/>
            <person name="Sato T."/>
            <person name="Scanlan E."/>
            <person name="Schleich S."/>
            <person name="Schroeter R."/>
            <person name="Scoffone F."/>
            <person name="Sekiguchi J."/>
            <person name="Sekowska A."/>
            <person name="Seror S.J."/>
            <person name="Serror P."/>
            <person name="Shin B.-S."/>
            <person name="Soldo B."/>
            <person name="Sorokin A."/>
            <person name="Tacconi E."/>
            <person name="Takagi T."/>
            <person name="Takahashi H."/>
            <person name="Takemaru K."/>
            <person name="Takeuchi M."/>
            <person name="Tamakoshi A."/>
            <person name="Tanaka T."/>
            <person name="Terpstra P."/>
            <person name="Tognoni A."/>
            <person name="Tosato V."/>
            <person name="Uchiyama S."/>
            <person name="Vandenbol M."/>
            <person name="Vannier F."/>
            <person name="Vassarotti A."/>
            <person name="Viari A."/>
            <person name="Wambutt R."/>
            <person name="Wedler E."/>
            <person name="Wedler H."/>
            <person name="Weitzenegger T."/>
            <person name="Winters P."/>
            <person name="Wipat A."/>
            <person name="Yamamoto H."/>
            <person name="Yamane K."/>
            <person name="Yasumoto K."/>
            <person name="Yata K."/>
            <person name="Yoshida K."/>
            <person name="Yoshikawa H.-F."/>
            <person name="Zumstein E."/>
            <person name="Yoshikawa H."/>
            <person name="Danchin A."/>
        </authorList>
    </citation>
    <scope>NUCLEOTIDE SEQUENCE [LARGE SCALE GENOMIC DNA]</scope>
    <source>
        <strain>168</strain>
    </source>
</reference>
<keyword id="KW-0238">DNA-binding</keyword>
<keyword id="KW-1185">Reference proteome</keyword>
<keyword id="KW-0804">Transcription</keyword>
<keyword id="KW-0805">Transcription regulation</keyword>
<dbReference type="EMBL" id="AL009126">
    <property type="protein sequence ID" value="CAX52687.1"/>
    <property type="molecule type" value="Genomic_DNA"/>
</dbReference>
<dbReference type="RefSeq" id="WP_009968126.1">
    <property type="nucleotide sequence ID" value="NZ_OZ025638.1"/>
</dbReference>
<dbReference type="RefSeq" id="YP_003097781.1">
    <property type="nucleotide sequence ID" value="NC_000964.3"/>
</dbReference>
<dbReference type="SMR" id="C0H3Q8"/>
<dbReference type="FunCoup" id="C0H3Q8">
    <property type="interactions" value="42"/>
</dbReference>
<dbReference type="STRING" id="224308.BSU32669"/>
<dbReference type="PaxDb" id="224308-BSU32669"/>
<dbReference type="EnsemblBacteria" id="CAX52687">
    <property type="protein sequence ID" value="CAX52687"/>
    <property type="gene ID" value="BSU_32669"/>
</dbReference>
<dbReference type="GeneID" id="8303129"/>
<dbReference type="KEGG" id="bsu:BSU32669"/>
<dbReference type="PATRIC" id="fig|224308.179.peg.3537"/>
<dbReference type="eggNOG" id="COG0640">
    <property type="taxonomic scope" value="Bacteria"/>
</dbReference>
<dbReference type="InParanoid" id="C0H3Q8"/>
<dbReference type="OrthoDB" id="9799175at2"/>
<dbReference type="PhylomeDB" id="C0H3Q8"/>
<dbReference type="BioCyc" id="BSUB:BSU32669-MONOMER"/>
<dbReference type="Proteomes" id="UP000001570">
    <property type="component" value="Chromosome"/>
</dbReference>
<dbReference type="GO" id="GO:0003677">
    <property type="term" value="F:DNA binding"/>
    <property type="evidence" value="ECO:0007669"/>
    <property type="project" value="UniProtKB-KW"/>
</dbReference>
<dbReference type="GO" id="GO:0003700">
    <property type="term" value="F:DNA-binding transcription factor activity"/>
    <property type="evidence" value="ECO:0007669"/>
    <property type="project" value="InterPro"/>
</dbReference>
<dbReference type="GO" id="GO:0006355">
    <property type="term" value="P:regulation of DNA-templated transcription"/>
    <property type="evidence" value="ECO:0000318"/>
    <property type="project" value="GO_Central"/>
</dbReference>
<dbReference type="CDD" id="cd00090">
    <property type="entry name" value="HTH_ARSR"/>
    <property type="match status" value="1"/>
</dbReference>
<dbReference type="FunFam" id="1.10.10.10:FF:001008">
    <property type="entry name" value="Transcriptional regulator"/>
    <property type="match status" value="1"/>
</dbReference>
<dbReference type="Gene3D" id="1.10.10.10">
    <property type="entry name" value="Winged helix-like DNA-binding domain superfamily/Winged helix DNA-binding domain"/>
    <property type="match status" value="1"/>
</dbReference>
<dbReference type="InterPro" id="IPR011991">
    <property type="entry name" value="ArsR-like_HTH"/>
</dbReference>
<dbReference type="InterPro" id="IPR001845">
    <property type="entry name" value="HTH_ArsR_DNA-bd_dom"/>
</dbReference>
<dbReference type="InterPro" id="IPR051081">
    <property type="entry name" value="HTH_MetalResp_TranReg"/>
</dbReference>
<dbReference type="InterPro" id="IPR036388">
    <property type="entry name" value="WH-like_DNA-bd_sf"/>
</dbReference>
<dbReference type="InterPro" id="IPR036390">
    <property type="entry name" value="WH_DNA-bd_sf"/>
</dbReference>
<dbReference type="NCBIfam" id="NF033788">
    <property type="entry name" value="HTH_metalloreg"/>
    <property type="match status" value="1"/>
</dbReference>
<dbReference type="PANTHER" id="PTHR33154">
    <property type="entry name" value="TRANSCRIPTIONAL REGULATOR, ARSR FAMILY"/>
    <property type="match status" value="1"/>
</dbReference>
<dbReference type="PANTHER" id="PTHR33154:SF33">
    <property type="entry name" value="TRANSCRIPTIONAL REPRESSOR SDPR"/>
    <property type="match status" value="1"/>
</dbReference>
<dbReference type="Pfam" id="PF12840">
    <property type="entry name" value="HTH_20"/>
    <property type="match status" value="1"/>
</dbReference>
<dbReference type="SMART" id="SM00418">
    <property type="entry name" value="HTH_ARSR"/>
    <property type="match status" value="1"/>
</dbReference>
<dbReference type="SUPFAM" id="SSF46785">
    <property type="entry name" value="Winged helix' DNA-binding domain"/>
    <property type="match status" value="1"/>
</dbReference>
<dbReference type="PROSITE" id="PS50987">
    <property type="entry name" value="HTH_ARSR_2"/>
    <property type="match status" value="1"/>
</dbReference>
<evidence type="ECO:0000255" key="1">
    <source>
        <dbReference type="PROSITE-ProRule" id="PRU00340"/>
    </source>
</evidence>
<name>YUZN_BACSU</name>
<organism>
    <name type="scientific">Bacillus subtilis (strain 168)</name>
    <dbReference type="NCBI Taxonomy" id="224308"/>
    <lineage>
        <taxon>Bacteria</taxon>
        <taxon>Bacillati</taxon>
        <taxon>Bacillota</taxon>
        <taxon>Bacilli</taxon>
        <taxon>Bacillales</taxon>
        <taxon>Bacillaceae</taxon>
        <taxon>Bacillus</taxon>
    </lineage>
</organism>
<sequence>MNGNKDAIFKALGDSTRRLILDELSERNELTLYELTIRLITKYDLSITRQAIAKHLSVLEDAGLVTSKRKGKYRVLIFNNEPLKNLLKGWIE</sequence>
<gene>
    <name type="primary">yuzN</name>
    <name type="ordered locus">BSU32669</name>
</gene>
<accession>C0H3Q8</accession>